<keyword id="KW-0143">Chaperone</keyword>
<keyword id="KW-0186">Copper</keyword>
<keyword id="KW-0963">Cytoplasm</keyword>
<keyword id="KW-0479">Metal-binding</keyword>
<feature type="chain" id="PRO_0000351277" description="Copper chaperone CopZ">
    <location>
        <begin position="1"/>
        <end position="68"/>
    </location>
</feature>
<feature type="domain" description="HMA" evidence="2">
    <location>
        <begin position="2"/>
        <end position="68"/>
    </location>
</feature>
<feature type="binding site" evidence="2">
    <location>
        <position position="13"/>
    </location>
    <ligand>
        <name>Cu cation</name>
        <dbReference type="ChEBI" id="CHEBI:23378"/>
    </ligand>
</feature>
<feature type="binding site" evidence="2">
    <location>
        <position position="16"/>
    </location>
    <ligand>
        <name>Cu cation</name>
        <dbReference type="ChEBI" id="CHEBI:23378"/>
    </ligand>
</feature>
<sequence length="68" mass="7237">MSQEILNVEGMSCGHCKSAVESALNNIDGVTSADVNLENGQVSVQYDDSKVAVSQMKDAIEDQGYDVV</sequence>
<proteinExistence type="inferred from homology"/>
<name>COPZ_STAAM</name>
<dbReference type="EMBL" id="BA000017">
    <property type="protein sequence ID" value="BAB58720.1"/>
    <property type="molecule type" value="Genomic_DNA"/>
</dbReference>
<dbReference type="RefSeq" id="WP_000076661.1">
    <property type="nucleotide sequence ID" value="NC_002758.2"/>
</dbReference>
<dbReference type="SMR" id="Q99R79"/>
<dbReference type="KEGG" id="sav:SAV2558"/>
<dbReference type="HOGENOM" id="CLU_134973_10_4_9"/>
<dbReference type="PhylomeDB" id="Q99R79"/>
<dbReference type="Proteomes" id="UP000002481">
    <property type="component" value="Chromosome"/>
</dbReference>
<dbReference type="GO" id="GO:0005737">
    <property type="term" value="C:cytoplasm"/>
    <property type="evidence" value="ECO:0007669"/>
    <property type="project" value="UniProtKB-SubCell"/>
</dbReference>
<dbReference type="GO" id="GO:0005507">
    <property type="term" value="F:copper ion binding"/>
    <property type="evidence" value="ECO:0007669"/>
    <property type="project" value="InterPro"/>
</dbReference>
<dbReference type="CDD" id="cd00371">
    <property type="entry name" value="HMA"/>
    <property type="match status" value="1"/>
</dbReference>
<dbReference type="FunFam" id="3.30.70.100:FF:000005">
    <property type="entry name" value="Copper-exporting P-type ATPase A"/>
    <property type="match status" value="1"/>
</dbReference>
<dbReference type="Gene3D" id="3.30.70.100">
    <property type="match status" value="1"/>
</dbReference>
<dbReference type="InterPro" id="IPR049740">
    <property type="entry name" value="CopZ"/>
</dbReference>
<dbReference type="InterPro" id="IPR017969">
    <property type="entry name" value="Heavy-metal-associated_CS"/>
</dbReference>
<dbReference type="InterPro" id="IPR006122">
    <property type="entry name" value="HMA_Cu_ion-bd"/>
</dbReference>
<dbReference type="InterPro" id="IPR006121">
    <property type="entry name" value="HMA_dom"/>
</dbReference>
<dbReference type="InterPro" id="IPR036163">
    <property type="entry name" value="HMA_dom_sf"/>
</dbReference>
<dbReference type="InterPro" id="IPR001802">
    <property type="entry name" value="MerP/CopZ"/>
</dbReference>
<dbReference type="NCBIfam" id="NF033795">
    <property type="entry name" value="chaper_CopZ_Bs"/>
    <property type="match status" value="1"/>
</dbReference>
<dbReference type="NCBIfam" id="TIGR00003">
    <property type="entry name" value="copper ion binding protein"/>
    <property type="match status" value="1"/>
</dbReference>
<dbReference type="PANTHER" id="PTHR46594">
    <property type="entry name" value="P-TYPE CATION-TRANSPORTING ATPASE"/>
    <property type="match status" value="1"/>
</dbReference>
<dbReference type="PANTHER" id="PTHR46594:SF4">
    <property type="entry name" value="P-TYPE CATION-TRANSPORTING ATPASE"/>
    <property type="match status" value="1"/>
</dbReference>
<dbReference type="Pfam" id="PF00403">
    <property type="entry name" value="HMA"/>
    <property type="match status" value="1"/>
</dbReference>
<dbReference type="PRINTS" id="PR00946">
    <property type="entry name" value="HGSCAVENGER"/>
</dbReference>
<dbReference type="SUPFAM" id="SSF55008">
    <property type="entry name" value="HMA, heavy metal-associated domain"/>
    <property type="match status" value="1"/>
</dbReference>
<dbReference type="PROSITE" id="PS01047">
    <property type="entry name" value="HMA_1"/>
    <property type="match status" value="1"/>
</dbReference>
<dbReference type="PROSITE" id="PS50846">
    <property type="entry name" value="HMA_2"/>
    <property type="match status" value="1"/>
</dbReference>
<reference key="1">
    <citation type="journal article" date="2001" name="Lancet">
        <title>Whole genome sequencing of meticillin-resistant Staphylococcus aureus.</title>
        <authorList>
            <person name="Kuroda M."/>
            <person name="Ohta T."/>
            <person name="Uchiyama I."/>
            <person name="Baba T."/>
            <person name="Yuzawa H."/>
            <person name="Kobayashi I."/>
            <person name="Cui L."/>
            <person name="Oguchi A."/>
            <person name="Aoki K."/>
            <person name="Nagai Y."/>
            <person name="Lian J.-Q."/>
            <person name="Ito T."/>
            <person name="Kanamori M."/>
            <person name="Matsumaru H."/>
            <person name="Maruyama A."/>
            <person name="Murakami H."/>
            <person name="Hosoyama A."/>
            <person name="Mizutani-Ui Y."/>
            <person name="Takahashi N.K."/>
            <person name="Sawano T."/>
            <person name="Inoue R."/>
            <person name="Kaito C."/>
            <person name="Sekimizu K."/>
            <person name="Hirakawa H."/>
            <person name="Kuhara S."/>
            <person name="Goto S."/>
            <person name="Yabuzaki J."/>
            <person name="Kanehisa M."/>
            <person name="Yamashita A."/>
            <person name="Oshima K."/>
            <person name="Furuya K."/>
            <person name="Yoshino C."/>
            <person name="Shiba T."/>
            <person name="Hattori M."/>
            <person name="Ogasawara N."/>
            <person name="Hayashi H."/>
            <person name="Hiramatsu K."/>
        </authorList>
    </citation>
    <scope>NUCLEOTIDE SEQUENCE [LARGE SCALE GENOMIC DNA]</scope>
    <source>
        <strain>Mu50 / ATCC 700699</strain>
    </source>
</reference>
<gene>
    <name type="primary">copZ</name>
    <name type="ordered locus">SAV2558</name>
</gene>
<organism>
    <name type="scientific">Staphylococcus aureus (strain Mu50 / ATCC 700699)</name>
    <dbReference type="NCBI Taxonomy" id="158878"/>
    <lineage>
        <taxon>Bacteria</taxon>
        <taxon>Bacillati</taxon>
        <taxon>Bacillota</taxon>
        <taxon>Bacilli</taxon>
        <taxon>Bacillales</taxon>
        <taxon>Staphylococcaceae</taxon>
        <taxon>Staphylococcus</taxon>
    </lineage>
</organism>
<protein>
    <recommendedName>
        <fullName>Copper chaperone CopZ</fullName>
    </recommendedName>
</protein>
<accession>Q99R79</accession>
<evidence type="ECO:0000250" key="1"/>
<evidence type="ECO:0000255" key="2">
    <source>
        <dbReference type="PROSITE-ProRule" id="PRU00280"/>
    </source>
</evidence>
<comment type="function">
    <text evidence="1">Chaperone that serves for the intracellular sequestration and transport of Cu(+). Delivers Cu(+) to the copper-exporting P-type ATPase A (CopA) (By similarity).</text>
</comment>
<comment type="subcellular location">
    <subcellularLocation>
        <location evidence="1">Cytoplasm</location>
    </subcellularLocation>
</comment>